<proteinExistence type="inferred from homology"/>
<reference key="1">
    <citation type="journal article" date="2005" name="Nature">
        <title>The genome of the social amoeba Dictyostelium discoideum.</title>
        <authorList>
            <person name="Eichinger L."/>
            <person name="Pachebat J.A."/>
            <person name="Gloeckner G."/>
            <person name="Rajandream M.A."/>
            <person name="Sucgang R."/>
            <person name="Berriman M."/>
            <person name="Song J."/>
            <person name="Olsen R."/>
            <person name="Szafranski K."/>
            <person name="Xu Q."/>
            <person name="Tunggal B."/>
            <person name="Kummerfeld S."/>
            <person name="Madera M."/>
            <person name="Konfortov B.A."/>
            <person name="Rivero F."/>
            <person name="Bankier A.T."/>
            <person name="Lehmann R."/>
            <person name="Hamlin N."/>
            <person name="Davies R."/>
            <person name="Gaudet P."/>
            <person name="Fey P."/>
            <person name="Pilcher K."/>
            <person name="Chen G."/>
            <person name="Saunders D."/>
            <person name="Sodergren E.J."/>
            <person name="Davis P."/>
            <person name="Kerhornou A."/>
            <person name="Nie X."/>
            <person name="Hall N."/>
            <person name="Anjard C."/>
            <person name="Hemphill L."/>
            <person name="Bason N."/>
            <person name="Farbrother P."/>
            <person name="Desany B."/>
            <person name="Just E."/>
            <person name="Morio T."/>
            <person name="Rost R."/>
            <person name="Churcher C.M."/>
            <person name="Cooper J."/>
            <person name="Haydock S."/>
            <person name="van Driessche N."/>
            <person name="Cronin A."/>
            <person name="Goodhead I."/>
            <person name="Muzny D.M."/>
            <person name="Mourier T."/>
            <person name="Pain A."/>
            <person name="Lu M."/>
            <person name="Harper D."/>
            <person name="Lindsay R."/>
            <person name="Hauser H."/>
            <person name="James K.D."/>
            <person name="Quiles M."/>
            <person name="Madan Babu M."/>
            <person name="Saito T."/>
            <person name="Buchrieser C."/>
            <person name="Wardroper A."/>
            <person name="Felder M."/>
            <person name="Thangavelu M."/>
            <person name="Johnson D."/>
            <person name="Knights A."/>
            <person name="Loulseged H."/>
            <person name="Mungall K.L."/>
            <person name="Oliver K."/>
            <person name="Price C."/>
            <person name="Quail M.A."/>
            <person name="Urushihara H."/>
            <person name="Hernandez J."/>
            <person name="Rabbinowitsch E."/>
            <person name="Steffen D."/>
            <person name="Sanders M."/>
            <person name="Ma J."/>
            <person name="Kohara Y."/>
            <person name="Sharp S."/>
            <person name="Simmonds M.N."/>
            <person name="Spiegler S."/>
            <person name="Tivey A."/>
            <person name="Sugano S."/>
            <person name="White B."/>
            <person name="Walker D."/>
            <person name="Woodward J.R."/>
            <person name="Winckler T."/>
            <person name="Tanaka Y."/>
            <person name="Shaulsky G."/>
            <person name="Schleicher M."/>
            <person name="Weinstock G.M."/>
            <person name="Rosenthal A."/>
            <person name="Cox E.C."/>
            <person name="Chisholm R.L."/>
            <person name="Gibbs R.A."/>
            <person name="Loomis W.F."/>
            <person name="Platzer M."/>
            <person name="Kay R.R."/>
            <person name="Williams J.G."/>
            <person name="Dear P.H."/>
            <person name="Noegel A.A."/>
            <person name="Barrell B.G."/>
            <person name="Kuspa A."/>
        </authorList>
    </citation>
    <scope>NUCLEOTIDE SEQUENCE [LARGE SCALE GENOMIC DNA]</scope>
    <source>
        <strain>AX4</strain>
    </source>
</reference>
<name>COX17_DICDI</name>
<gene>
    <name type="primary">cox17</name>
    <name type="ORF">DDB_G0288831</name>
</gene>
<organism>
    <name type="scientific">Dictyostelium discoideum</name>
    <name type="common">Social amoeba</name>
    <dbReference type="NCBI Taxonomy" id="44689"/>
    <lineage>
        <taxon>Eukaryota</taxon>
        <taxon>Amoebozoa</taxon>
        <taxon>Evosea</taxon>
        <taxon>Eumycetozoa</taxon>
        <taxon>Dictyostelia</taxon>
        <taxon>Dictyosteliales</taxon>
        <taxon>Dictyosteliaceae</taxon>
        <taxon>Dictyostelium</taxon>
    </lineage>
</organism>
<sequence>MSIAETNTTTEVAAPKKKMCCACPETKKVRDECIVANGEEKCAALIELHKVCLRKEGFDV</sequence>
<protein>
    <recommendedName>
        <fullName>Cytochrome c oxidase copper chaperone</fullName>
    </recommendedName>
</protein>
<dbReference type="EMBL" id="AAFI02000125">
    <property type="protein sequence ID" value="EAL63037.1"/>
    <property type="molecule type" value="Genomic_DNA"/>
</dbReference>
<dbReference type="RefSeq" id="XP_636547.1">
    <property type="nucleotide sequence ID" value="XM_631455.1"/>
</dbReference>
<dbReference type="SMR" id="Q54ID0"/>
<dbReference type="FunCoup" id="Q54ID0">
    <property type="interactions" value="89"/>
</dbReference>
<dbReference type="STRING" id="44689.Q54ID0"/>
<dbReference type="PaxDb" id="44689-DDB0305161"/>
<dbReference type="EnsemblProtists" id="EAL63037">
    <property type="protein sequence ID" value="EAL63037"/>
    <property type="gene ID" value="DDB_G0288831"/>
</dbReference>
<dbReference type="GeneID" id="8626832"/>
<dbReference type="KEGG" id="ddi:DDB_G0288831"/>
<dbReference type="dictyBase" id="DDB_G0288831">
    <property type="gene designation" value="cox17"/>
</dbReference>
<dbReference type="VEuPathDB" id="AmoebaDB:DDB_G0288831"/>
<dbReference type="eggNOG" id="KOG3496">
    <property type="taxonomic scope" value="Eukaryota"/>
</dbReference>
<dbReference type="HOGENOM" id="CLU_149618_1_1_1"/>
<dbReference type="InParanoid" id="Q54ID0"/>
<dbReference type="OMA" id="HKACMRK"/>
<dbReference type="PhylomeDB" id="Q54ID0"/>
<dbReference type="PRO" id="PR:Q54ID0"/>
<dbReference type="Proteomes" id="UP000002195">
    <property type="component" value="Chromosome 5"/>
</dbReference>
<dbReference type="GO" id="GO:0005758">
    <property type="term" value="C:mitochondrial intermembrane space"/>
    <property type="evidence" value="ECO:0000318"/>
    <property type="project" value="GO_Central"/>
</dbReference>
<dbReference type="GO" id="GO:0016531">
    <property type="term" value="F:copper chaperone activity"/>
    <property type="evidence" value="ECO:0000318"/>
    <property type="project" value="GO_Central"/>
</dbReference>
<dbReference type="GO" id="GO:0005507">
    <property type="term" value="F:copper ion binding"/>
    <property type="evidence" value="ECO:0007669"/>
    <property type="project" value="InterPro"/>
</dbReference>
<dbReference type="GO" id="GO:0033617">
    <property type="term" value="P:mitochondrial cytochrome c oxidase assembly"/>
    <property type="evidence" value="ECO:0000318"/>
    <property type="project" value="GO_Central"/>
</dbReference>
<dbReference type="Gene3D" id="1.10.287.1130">
    <property type="entry name" value="CytochromE C oxidase copper chaperone"/>
    <property type="match status" value="1"/>
</dbReference>
<dbReference type="InterPro" id="IPR009069">
    <property type="entry name" value="Cys_alpha_HP_mot_SF"/>
</dbReference>
<dbReference type="InterPro" id="IPR007745">
    <property type="entry name" value="Cyt_c_oxidase_Cu-chaperone"/>
</dbReference>
<dbReference type="PANTHER" id="PTHR16719">
    <property type="entry name" value="CYTOCHROME C OXIDASE COPPER CHAPERONE"/>
    <property type="match status" value="1"/>
</dbReference>
<dbReference type="PANTHER" id="PTHR16719:SF0">
    <property type="entry name" value="CYTOCHROME C OXIDASE COPPER CHAPERONE"/>
    <property type="match status" value="1"/>
</dbReference>
<dbReference type="Pfam" id="PF05051">
    <property type="entry name" value="COX17"/>
    <property type="match status" value="1"/>
</dbReference>
<dbReference type="SUPFAM" id="SSF47072">
    <property type="entry name" value="Cysteine alpha-hairpin motif"/>
    <property type="match status" value="1"/>
</dbReference>
<dbReference type="PROSITE" id="PS51808">
    <property type="entry name" value="CHCH"/>
    <property type="match status" value="1"/>
</dbReference>
<comment type="function">
    <text evidence="1">Copper chaperone for cytochrome c oxidase (COX). Binds two copper ions and deliver them to the Cu(A) site of COX (By similarity).</text>
</comment>
<comment type="subcellular location">
    <subcellularLocation>
        <location evidence="1">Mitochondrion intermembrane space</location>
    </subcellularLocation>
</comment>
<comment type="similarity">
    <text evidence="4">Belongs to the COX17 family.</text>
</comment>
<keyword id="KW-0143">Chaperone</keyword>
<keyword id="KW-0186">Copper</keyword>
<keyword id="KW-1015">Disulfide bond</keyword>
<keyword id="KW-0479">Metal-binding</keyword>
<keyword id="KW-0496">Mitochondrion</keyword>
<keyword id="KW-1185">Reference proteome</keyword>
<feature type="chain" id="PRO_0000327790" description="Cytochrome c oxidase copper chaperone">
    <location>
        <begin position="1"/>
        <end position="60"/>
    </location>
</feature>
<feature type="domain" description="CHCH" evidence="3">
    <location>
        <begin position="20"/>
        <end position="60"/>
    </location>
</feature>
<feature type="short sequence motif" description="Cx9C motif 1" evidence="3">
    <location>
        <begin position="23"/>
        <end position="33"/>
    </location>
</feature>
<feature type="short sequence motif" description="Cx9C motif 2" evidence="3">
    <location>
        <begin position="42"/>
        <end position="52"/>
    </location>
</feature>
<feature type="binding site" evidence="2">
    <location>
        <position position="20"/>
    </location>
    <ligand>
        <name>Cu cation</name>
        <dbReference type="ChEBI" id="CHEBI:23378"/>
    </ligand>
</feature>
<feature type="binding site" evidence="2">
    <location>
        <position position="21"/>
    </location>
    <ligand>
        <name>Cu cation</name>
        <dbReference type="ChEBI" id="CHEBI:23378"/>
    </ligand>
</feature>
<feature type="disulfide bond" evidence="3">
    <location>
        <begin position="23"/>
        <end position="52"/>
    </location>
</feature>
<feature type="disulfide bond" evidence="3">
    <location>
        <begin position="33"/>
        <end position="42"/>
    </location>
</feature>
<evidence type="ECO:0000250" key="1"/>
<evidence type="ECO:0000250" key="2">
    <source>
        <dbReference type="UniProtKB" id="Q14061"/>
    </source>
</evidence>
<evidence type="ECO:0000255" key="3">
    <source>
        <dbReference type="PROSITE-ProRule" id="PRU01150"/>
    </source>
</evidence>
<evidence type="ECO:0000305" key="4"/>
<accession>Q54ID0</accession>